<proteinExistence type="inferred from homology"/>
<reference key="1">
    <citation type="journal article" date="2005" name="Nucleic Acids Res.">
        <title>Genome dynamics and diversity of Shigella species, the etiologic agents of bacillary dysentery.</title>
        <authorList>
            <person name="Yang F."/>
            <person name="Yang J."/>
            <person name="Zhang X."/>
            <person name="Chen L."/>
            <person name="Jiang Y."/>
            <person name="Yan Y."/>
            <person name="Tang X."/>
            <person name="Wang J."/>
            <person name="Xiong Z."/>
            <person name="Dong J."/>
            <person name="Xue Y."/>
            <person name="Zhu Y."/>
            <person name="Xu X."/>
            <person name="Sun L."/>
            <person name="Chen S."/>
            <person name="Nie H."/>
            <person name="Peng J."/>
            <person name="Xu J."/>
            <person name="Wang Y."/>
            <person name="Yuan Z."/>
            <person name="Wen Y."/>
            <person name="Yao Z."/>
            <person name="Shen Y."/>
            <person name="Qiang B."/>
            <person name="Hou Y."/>
            <person name="Yu J."/>
            <person name="Jin Q."/>
        </authorList>
    </citation>
    <scope>NUCLEOTIDE SEQUENCE [LARGE SCALE GENOMIC DNA]</scope>
    <source>
        <strain>Ss046</strain>
    </source>
</reference>
<keyword id="KW-0963">Cytoplasm</keyword>
<keyword id="KW-0489">Methyltransferase</keyword>
<keyword id="KW-1185">Reference proteome</keyword>
<keyword id="KW-0698">rRNA processing</keyword>
<keyword id="KW-0949">S-adenosyl-L-methionine</keyword>
<keyword id="KW-0808">Transferase</keyword>
<accession>Q3YY51</accession>
<comment type="function">
    <text evidence="1">Catalyzes the 2'-O-methylation at nucleotide C2498 in 23S rRNA.</text>
</comment>
<comment type="catalytic activity">
    <reaction evidence="1">
        <text>cytidine(2498) in 23S rRNA + S-adenosyl-L-methionine = 2'-O-methylcytidine(2498) in 23S rRNA + S-adenosyl-L-homocysteine + H(+)</text>
        <dbReference type="Rhea" id="RHEA:42788"/>
        <dbReference type="Rhea" id="RHEA-COMP:10244"/>
        <dbReference type="Rhea" id="RHEA-COMP:10245"/>
        <dbReference type="ChEBI" id="CHEBI:15378"/>
        <dbReference type="ChEBI" id="CHEBI:57856"/>
        <dbReference type="ChEBI" id="CHEBI:59789"/>
        <dbReference type="ChEBI" id="CHEBI:74495"/>
        <dbReference type="ChEBI" id="CHEBI:82748"/>
        <dbReference type="EC" id="2.1.1.186"/>
    </reaction>
</comment>
<comment type="subunit">
    <text evidence="1">Monomer.</text>
</comment>
<comment type="subcellular location">
    <subcellularLocation>
        <location evidence="1">Cytoplasm</location>
    </subcellularLocation>
</comment>
<comment type="similarity">
    <text evidence="1">Belongs to the class I-like SAM-binding methyltransferase superfamily. RNA methyltransferase RlmE family. RlmM subfamily.</text>
</comment>
<evidence type="ECO:0000255" key="1">
    <source>
        <dbReference type="HAMAP-Rule" id="MF_01551"/>
    </source>
</evidence>
<gene>
    <name evidence="1" type="primary">rlmM</name>
    <name type="ordered locus">SSON_2963</name>
</gene>
<protein>
    <recommendedName>
        <fullName evidence="1">Ribosomal RNA large subunit methyltransferase M</fullName>
        <ecNumber evidence="1">2.1.1.186</ecNumber>
    </recommendedName>
    <alternativeName>
        <fullName evidence="1">23S rRNA (cytidine2498-2'-O)-methyltransferase</fullName>
    </alternativeName>
    <alternativeName>
        <fullName evidence="1">23S rRNA 2'-O-ribose methyltransferase RlmM</fullName>
    </alternativeName>
</protein>
<dbReference type="EC" id="2.1.1.186" evidence="1"/>
<dbReference type="EMBL" id="CP000038">
    <property type="protein sequence ID" value="AAZ89561.1"/>
    <property type="molecule type" value="Genomic_DNA"/>
</dbReference>
<dbReference type="RefSeq" id="WP_001045510.1">
    <property type="nucleotide sequence ID" value="NC_007384.1"/>
</dbReference>
<dbReference type="SMR" id="Q3YY51"/>
<dbReference type="GeneID" id="93779192"/>
<dbReference type="KEGG" id="ssn:SSON_2963"/>
<dbReference type="HOGENOM" id="CLU_043780_0_0_6"/>
<dbReference type="Proteomes" id="UP000002529">
    <property type="component" value="Chromosome"/>
</dbReference>
<dbReference type="GO" id="GO:0005737">
    <property type="term" value="C:cytoplasm"/>
    <property type="evidence" value="ECO:0007669"/>
    <property type="project" value="UniProtKB-SubCell"/>
</dbReference>
<dbReference type="GO" id="GO:0008757">
    <property type="term" value="F:S-adenosylmethionine-dependent methyltransferase activity"/>
    <property type="evidence" value="ECO:0007669"/>
    <property type="project" value="UniProtKB-UniRule"/>
</dbReference>
<dbReference type="GO" id="GO:0032259">
    <property type="term" value="P:methylation"/>
    <property type="evidence" value="ECO:0007669"/>
    <property type="project" value="UniProtKB-KW"/>
</dbReference>
<dbReference type="GO" id="GO:0006364">
    <property type="term" value="P:rRNA processing"/>
    <property type="evidence" value="ECO:0007669"/>
    <property type="project" value="UniProtKB-UniRule"/>
</dbReference>
<dbReference type="FunFam" id="3.30.2300.20:FF:000001">
    <property type="entry name" value="Ribosomal RNA large subunit methyltransferase M"/>
    <property type="match status" value="1"/>
</dbReference>
<dbReference type="FunFam" id="3.30.70.2810:FF:000001">
    <property type="entry name" value="Ribosomal RNA large subunit methyltransferase M"/>
    <property type="match status" value="1"/>
</dbReference>
<dbReference type="FunFam" id="3.40.50.150:FF:000020">
    <property type="entry name" value="Ribosomal RNA large subunit methyltransferase M"/>
    <property type="match status" value="1"/>
</dbReference>
<dbReference type="Gene3D" id="3.30.2300.20">
    <property type="match status" value="1"/>
</dbReference>
<dbReference type="Gene3D" id="3.30.70.2810">
    <property type="match status" value="1"/>
</dbReference>
<dbReference type="Gene3D" id="3.40.50.150">
    <property type="entry name" value="Vaccinia Virus protein VP39"/>
    <property type="match status" value="1"/>
</dbReference>
<dbReference type="HAMAP" id="MF_01551">
    <property type="entry name" value="23SrRNA_methyltr_M"/>
    <property type="match status" value="1"/>
</dbReference>
<dbReference type="InterPro" id="IPR040739">
    <property type="entry name" value="RlmM_FDX"/>
</dbReference>
<dbReference type="InterPro" id="IPR048646">
    <property type="entry name" value="RlmM_THUMP-like"/>
</dbReference>
<dbReference type="InterPro" id="IPR002877">
    <property type="entry name" value="RNA_MeTrfase_FtsJ_dom"/>
</dbReference>
<dbReference type="InterPro" id="IPR011224">
    <property type="entry name" value="rRNA_MeTrfase_M"/>
</dbReference>
<dbReference type="InterPro" id="IPR029063">
    <property type="entry name" value="SAM-dependent_MTases_sf"/>
</dbReference>
<dbReference type="NCBIfam" id="NF008734">
    <property type="entry name" value="PRK11760.1"/>
    <property type="match status" value="1"/>
</dbReference>
<dbReference type="PANTHER" id="PTHR37524">
    <property type="entry name" value="RIBOSOMAL RNA LARGE SUBUNIT METHYLTRANSFERASE M"/>
    <property type="match status" value="1"/>
</dbReference>
<dbReference type="PANTHER" id="PTHR37524:SF2">
    <property type="entry name" value="RIBOSOMAL RNA METHYLTRANSFERASE FTSJ DOMAIN-CONTAINING PROTEIN"/>
    <property type="match status" value="1"/>
</dbReference>
<dbReference type="Pfam" id="PF01728">
    <property type="entry name" value="FtsJ"/>
    <property type="match status" value="1"/>
</dbReference>
<dbReference type="Pfam" id="PF18125">
    <property type="entry name" value="RlmM_FDX"/>
    <property type="match status" value="1"/>
</dbReference>
<dbReference type="Pfam" id="PF21239">
    <property type="entry name" value="RLMM_N"/>
    <property type="match status" value="1"/>
</dbReference>
<dbReference type="PIRSF" id="PIRSF028774">
    <property type="entry name" value="UCP028774"/>
    <property type="match status" value="1"/>
</dbReference>
<dbReference type="SUPFAM" id="SSF53335">
    <property type="entry name" value="S-adenosyl-L-methionine-dependent methyltransferases"/>
    <property type="match status" value="1"/>
</dbReference>
<feature type="chain" id="PRO_0000070428" description="Ribosomal RNA large subunit methyltransferase M">
    <location>
        <begin position="1"/>
        <end position="366"/>
    </location>
</feature>
<feature type="active site" description="Proton acceptor" evidence="1">
    <location>
        <position position="306"/>
    </location>
</feature>
<feature type="binding site" evidence="1">
    <location>
        <position position="188"/>
    </location>
    <ligand>
        <name>S-adenosyl-L-methionine</name>
        <dbReference type="ChEBI" id="CHEBI:59789"/>
    </ligand>
</feature>
<feature type="binding site" evidence="1">
    <location>
        <begin position="221"/>
        <end position="224"/>
    </location>
    <ligand>
        <name>S-adenosyl-L-methionine</name>
        <dbReference type="ChEBI" id="CHEBI:59789"/>
    </ligand>
</feature>
<feature type="binding site" evidence="1">
    <location>
        <position position="240"/>
    </location>
    <ligand>
        <name>S-adenosyl-L-methionine</name>
        <dbReference type="ChEBI" id="CHEBI:59789"/>
    </ligand>
</feature>
<feature type="binding site" evidence="1">
    <location>
        <position position="260"/>
    </location>
    <ligand>
        <name>S-adenosyl-L-methionine</name>
        <dbReference type="ChEBI" id="CHEBI:59789"/>
    </ligand>
</feature>
<feature type="binding site" evidence="1">
    <location>
        <position position="277"/>
    </location>
    <ligand>
        <name>S-adenosyl-L-methionine</name>
        <dbReference type="ChEBI" id="CHEBI:59789"/>
    </ligand>
</feature>
<organism>
    <name type="scientific">Shigella sonnei (strain Ss046)</name>
    <dbReference type="NCBI Taxonomy" id="300269"/>
    <lineage>
        <taxon>Bacteria</taxon>
        <taxon>Pseudomonadati</taxon>
        <taxon>Pseudomonadota</taxon>
        <taxon>Gammaproteobacteria</taxon>
        <taxon>Enterobacterales</taxon>
        <taxon>Enterobacteriaceae</taxon>
        <taxon>Shigella</taxon>
    </lineage>
</organism>
<name>RLMM_SHISS</name>
<sequence length="366" mass="41977">MNKVVLLCRPGFEKECAAEITDKAGQREIFGFARVKENAGYVIYECYQPDDGDKLIRELPFSSLIFARQWFVVGELLQHLPPEDRITPIVDMLQGVVEKGGELRVEVADTNESKELLKFCRKFTVPLRAALRDAGVLANYETPKRPVVHVFFIAPGCCYTGYSYSNNNSPFYMGIPRLKFPAEAPSRSTLKLEEAFHVFIPADEWDERLANGMWAVDLGACPGGWTYQLVKRNMWVYSVDNGPMAQSLMDTGQVTWLREDGFKFRPTRSNISWMVCDMVEKPAKVAALMAQWLVNGWCRETIFNLKLPMKKRYEEVSHNLAYIQAQLDEHGINAQIQARQLYHDREEVTVHVRRIWAAVGGRRDER</sequence>